<accession>Q9LYP2</accession>
<accession>Q8RWT3</accession>
<comment type="function">
    <text evidence="1">May be involved in cooperative interactions with calmodulins or calmodulin-like proteins (By similarity). Recruits calmodulin proteins to microtubules, thus being a potential scaffold in cellular signaling and trafficking (By similarity). May associate with nucleic acids and regulate gene expression at the transcriptional or post-transcriptional level (By similarity).</text>
</comment>
<comment type="subunit">
    <text evidence="1">Binds to multiple calmodulin (CaM) in the presence of Ca(2+) and CaM-like proteins.</text>
</comment>
<comment type="subcellular location">
    <subcellularLocation>
        <location evidence="4">Nucleus</location>
        <location evidence="4">Nuclear body</location>
    </subcellularLocation>
    <subcellularLocation>
        <location evidence="4">Cell membrane</location>
    </subcellularLocation>
</comment>
<comment type="similarity">
    <text evidence="6">Belongs to the IQD family.</text>
</comment>
<comment type="sequence caution" evidence="6">
    <conflict type="erroneous initiation">
        <sequence resource="EMBL-CDS" id="AAM14074"/>
    </conflict>
    <text>Extended N-terminus.</text>
</comment>
<evidence type="ECO:0000250" key="1">
    <source>
        <dbReference type="UniProtKB" id="Q9SF32"/>
    </source>
</evidence>
<evidence type="ECO:0000255" key="2">
    <source>
        <dbReference type="PROSITE-ProRule" id="PRU00116"/>
    </source>
</evidence>
<evidence type="ECO:0000256" key="3">
    <source>
        <dbReference type="SAM" id="MobiDB-lite"/>
    </source>
</evidence>
<evidence type="ECO:0000269" key="4">
    <source>
    </source>
</evidence>
<evidence type="ECO:0000303" key="5">
    <source>
    </source>
</evidence>
<evidence type="ECO:0000305" key="6"/>
<evidence type="ECO:0000312" key="7">
    <source>
        <dbReference type="Araport" id="AT5G07240"/>
    </source>
</evidence>
<evidence type="ECO:0000312" key="8">
    <source>
        <dbReference type="EMBL" id="CAB87280.1"/>
    </source>
</evidence>
<keyword id="KW-0112">Calmodulin-binding</keyword>
<keyword id="KW-1003">Cell membrane</keyword>
<keyword id="KW-0472">Membrane</keyword>
<keyword id="KW-0539">Nucleus</keyword>
<keyword id="KW-1185">Reference proteome</keyword>
<keyword id="KW-0677">Repeat</keyword>
<name>IQD24_ARATH</name>
<sequence>MGFFGRLFGSKKQEKATPNRRRWSFATRSSHPENDSSSHSSKRRGDEDVLNGDKHAIAVAAATAAVAEAALAAARAAAEVVRLTNGGRNSSVKQISRSNRRWSQEYKAAMKIQSAFRGYLARRALRALKALVKLQALVKGHIVRKQTADMLRRMQTLVRLQARARASRSSHVSDSSHPPTLMIPSSPQSFHARCVSEAEYSKVIAMDHHHNNHRSPMGSSRLLDQWRTEESLWSAPKYNEDDDKILEVDTWKPHFRESPRKRGSLVVPTSVENSPQLRSRTGSSSGGSRRKTPFTPARSEYEYYSGYHPNYMANTESYKAKVRSQSAPRQRLQDLPSESGYKRSIQGQYYYYTPAAERSFDQRSDNGIAGYRGVSDGLDRNQSDKSKMYTSFFSSNPLFFQ</sequence>
<gene>
    <name evidence="5" type="primary">IQD24</name>
    <name evidence="7" type="ordered locus">At5g07240</name>
    <name evidence="8" type="ORF">T28J14.180</name>
</gene>
<protein>
    <recommendedName>
        <fullName evidence="5">Protein IQ-DOMAIN 24</fullName>
        <shortName evidence="5">AtIQD24</shortName>
    </recommendedName>
</protein>
<dbReference type="EMBL" id="AL163652">
    <property type="protein sequence ID" value="CAB87280.1"/>
    <property type="molecule type" value="Genomic_DNA"/>
</dbReference>
<dbReference type="EMBL" id="CP002688">
    <property type="protein sequence ID" value="AED91126.1"/>
    <property type="molecule type" value="Genomic_DNA"/>
</dbReference>
<dbReference type="EMBL" id="AY091125">
    <property type="protein sequence ID" value="AAM14074.1"/>
    <property type="status" value="ALT_INIT"/>
    <property type="molecule type" value="mRNA"/>
</dbReference>
<dbReference type="EMBL" id="BT006056">
    <property type="protein sequence ID" value="AAP04041.1"/>
    <property type="molecule type" value="mRNA"/>
</dbReference>
<dbReference type="PIR" id="T48495">
    <property type="entry name" value="T48495"/>
</dbReference>
<dbReference type="RefSeq" id="NP_196341.1">
    <property type="nucleotide sequence ID" value="NM_120806.4"/>
</dbReference>
<dbReference type="SMR" id="Q9LYP2"/>
<dbReference type="FunCoup" id="Q9LYP2">
    <property type="interactions" value="418"/>
</dbReference>
<dbReference type="IntAct" id="Q9LYP2">
    <property type="interactions" value="1"/>
</dbReference>
<dbReference type="GlyGen" id="Q9LYP2">
    <property type="glycosylation" value="1 site"/>
</dbReference>
<dbReference type="iPTMnet" id="Q9LYP2"/>
<dbReference type="PaxDb" id="3702-AT5G07240.1"/>
<dbReference type="EnsemblPlants" id="AT5G07240.1">
    <property type="protein sequence ID" value="AT5G07240.1"/>
    <property type="gene ID" value="AT5G07240"/>
</dbReference>
<dbReference type="GeneID" id="830615"/>
<dbReference type="Gramene" id="AT5G07240.1">
    <property type="protein sequence ID" value="AT5G07240.1"/>
    <property type="gene ID" value="AT5G07240"/>
</dbReference>
<dbReference type="KEGG" id="ath:AT5G07240"/>
<dbReference type="Araport" id="AT5G07240"/>
<dbReference type="TAIR" id="AT5G07240">
    <property type="gene designation" value="IQD24"/>
</dbReference>
<dbReference type="HOGENOM" id="CLU_042730_1_1_1"/>
<dbReference type="InParanoid" id="Q9LYP2"/>
<dbReference type="OMA" id="YEHPPRA"/>
<dbReference type="PhylomeDB" id="Q9LYP2"/>
<dbReference type="PRO" id="PR:Q9LYP2"/>
<dbReference type="Proteomes" id="UP000006548">
    <property type="component" value="Chromosome 5"/>
</dbReference>
<dbReference type="ExpressionAtlas" id="Q9LYP2">
    <property type="expression patterns" value="baseline and differential"/>
</dbReference>
<dbReference type="GO" id="GO:0016604">
    <property type="term" value="C:nuclear body"/>
    <property type="evidence" value="ECO:0007669"/>
    <property type="project" value="UniProtKB-SubCell"/>
</dbReference>
<dbReference type="GO" id="GO:0005886">
    <property type="term" value="C:plasma membrane"/>
    <property type="evidence" value="ECO:0007669"/>
    <property type="project" value="UniProtKB-SubCell"/>
</dbReference>
<dbReference type="GO" id="GO:0005516">
    <property type="term" value="F:calmodulin binding"/>
    <property type="evidence" value="ECO:0007669"/>
    <property type="project" value="UniProtKB-KW"/>
</dbReference>
<dbReference type="CDD" id="cd23767">
    <property type="entry name" value="IQCD"/>
    <property type="match status" value="1"/>
</dbReference>
<dbReference type="Gene3D" id="1.20.5.190">
    <property type="match status" value="1"/>
</dbReference>
<dbReference type="InterPro" id="IPR025064">
    <property type="entry name" value="DUF4005"/>
</dbReference>
<dbReference type="InterPro" id="IPR000048">
    <property type="entry name" value="IQ_motif_EF-hand-BS"/>
</dbReference>
<dbReference type="InterPro" id="IPR027417">
    <property type="entry name" value="P-loop_NTPase"/>
</dbReference>
<dbReference type="PANTHER" id="PTHR32295">
    <property type="entry name" value="IQ-DOMAIN 5-RELATED"/>
    <property type="match status" value="1"/>
</dbReference>
<dbReference type="PANTHER" id="PTHR32295:SF174">
    <property type="entry name" value="PROTEIN IQ-DOMAIN 24"/>
    <property type="match status" value="1"/>
</dbReference>
<dbReference type="Pfam" id="PF13178">
    <property type="entry name" value="DUF4005"/>
    <property type="match status" value="1"/>
</dbReference>
<dbReference type="Pfam" id="PF00612">
    <property type="entry name" value="IQ"/>
    <property type="match status" value="2"/>
</dbReference>
<dbReference type="SMART" id="SM00015">
    <property type="entry name" value="IQ"/>
    <property type="match status" value="2"/>
</dbReference>
<dbReference type="SUPFAM" id="SSF52540">
    <property type="entry name" value="P-loop containing nucleoside triphosphate hydrolases"/>
    <property type="match status" value="1"/>
</dbReference>
<dbReference type="PROSITE" id="PS50096">
    <property type="entry name" value="IQ"/>
    <property type="match status" value="2"/>
</dbReference>
<reference key="1">
    <citation type="journal article" date="2000" name="Nature">
        <title>Sequence and analysis of chromosome 5 of the plant Arabidopsis thaliana.</title>
        <authorList>
            <person name="Tabata S."/>
            <person name="Kaneko T."/>
            <person name="Nakamura Y."/>
            <person name="Kotani H."/>
            <person name="Kato T."/>
            <person name="Asamizu E."/>
            <person name="Miyajima N."/>
            <person name="Sasamoto S."/>
            <person name="Kimura T."/>
            <person name="Hosouchi T."/>
            <person name="Kawashima K."/>
            <person name="Kohara M."/>
            <person name="Matsumoto M."/>
            <person name="Matsuno A."/>
            <person name="Muraki A."/>
            <person name="Nakayama S."/>
            <person name="Nakazaki N."/>
            <person name="Naruo K."/>
            <person name="Okumura S."/>
            <person name="Shinpo S."/>
            <person name="Takeuchi C."/>
            <person name="Wada T."/>
            <person name="Watanabe A."/>
            <person name="Yamada M."/>
            <person name="Yasuda M."/>
            <person name="Sato S."/>
            <person name="de la Bastide M."/>
            <person name="Huang E."/>
            <person name="Spiegel L."/>
            <person name="Gnoj L."/>
            <person name="O'Shaughnessy A."/>
            <person name="Preston R."/>
            <person name="Habermann K."/>
            <person name="Murray J."/>
            <person name="Johnson D."/>
            <person name="Rohlfing T."/>
            <person name="Nelson J."/>
            <person name="Stoneking T."/>
            <person name="Pepin K."/>
            <person name="Spieth J."/>
            <person name="Sekhon M."/>
            <person name="Armstrong J."/>
            <person name="Becker M."/>
            <person name="Belter E."/>
            <person name="Cordum H."/>
            <person name="Cordes M."/>
            <person name="Courtney L."/>
            <person name="Courtney W."/>
            <person name="Dante M."/>
            <person name="Du H."/>
            <person name="Edwards J."/>
            <person name="Fryman J."/>
            <person name="Haakensen B."/>
            <person name="Lamar E."/>
            <person name="Latreille P."/>
            <person name="Leonard S."/>
            <person name="Meyer R."/>
            <person name="Mulvaney E."/>
            <person name="Ozersky P."/>
            <person name="Riley A."/>
            <person name="Strowmatt C."/>
            <person name="Wagner-McPherson C."/>
            <person name="Wollam A."/>
            <person name="Yoakum M."/>
            <person name="Bell M."/>
            <person name="Dedhia N."/>
            <person name="Parnell L."/>
            <person name="Shah R."/>
            <person name="Rodriguez M."/>
            <person name="Hoon See L."/>
            <person name="Vil D."/>
            <person name="Baker J."/>
            <person name="Kirchoff K."/>
            <person name="Toth K."/>
            <person name="King L."/>
            <person name="Bahret A."/>
            <person name="Miller B."/>
            <person name="Marra M.A."/>
            <person name="Martienssen R."/>
            <person name="McCombie W.R."/>
            <person name="Wilson R.K."/>
            <person name="Murphy G."/>
            <person name="Bancroft I."/>
            <person name="Volckaert G."/>
            <person name="Wambutt R."/>
            <person name="Duesterhoeft A."/>
            <person name="Stiekema W."/>
            <person name="Pohl T."/>
            <person name="Entian K.-D."/>
            <person name="Terryn N."/>
            <person name="Hartley N."/>
            <person name="Bent E."/>
            <person name="Johnson S."/>
            <person name="Langham S.-A."/>
            <person name="McCullagh B."/>
            <person name="Robben J."/>
            <person name="Grymonprez B."/>
            <person name="Zimmermann W."/>
            <person name="Ramsperger U."/>
            <person name="Wedler H."/>
            <person name="Balke K."/>
            <person name="Wedler E."/>
            <person name="Peters S."/>
            <person name="van Staveren M."/>
            <person name="Dirkse W."/>
            <person name="Mooijman P."/>
            <person name="Klein Lankhorst R."/>
            <person name="Weitzenegger T."/>
            <person name="Bothe G."/>
            <person name="Rose M."/>
            <person name="Hauf J."/>
            <person name="Berneiser S."/>
            <person name="Hempel S."/>
            <person name="Feldpausch M."/>
            <person name="Lamberth S."/>
            <person name="Villarroel R."/>
            <person name="Gielen J."/>
            <person name="Ardiles W."/>
            <person name="Bents O."/>
            <person name="Lemcke K."/>
            <person name="Kolesov G."/>
            <person name="Mayer K.F.X."/>
            <person name="Rudd S."/>
            <person name="Schoof H."/>
            <person name="Schueller C."/>
            <person name="Zaccaria P."/>
            <person name="Mewes H.-W."/>
            <person name="Bevan M."/>
            <person name="Fransz P.F."/>
        </authorList>
    </citation>
    <scope>NUCLEOTIDE SEQUENCE [LARGE SCALE GENOMIC DNA]</scope>
    <source>
        <strain>cv. Columbia</strain>
    </source>
</reference>
<reference key="2">
    <citation type="journal article" date="2017" name="Plant J.">
        <title>Araport11: a complete reannotation of the Arabidopsis thaliana reference genome.</title>
        <authorList>
            <person name="Cheng C.Y."/>
            <person name="Krishnakumar V."/>
            <person name="Chan A.P."/>
            <person name="Thibaud-Nissen F."/>
            <person name="Schobel S."/>
            <person name="Town C.D."/>
        </authorList>
    </citation>
    <scope>GENOME REANNOTATION</scope>
    <source>
        <strain>cv. Columbia</strain>
    </source>
</reference>
<reference key="3">
    <citation type="journal article" date="2003" name="Science">
        <title>Empirical analysis of transcriptional activity in the Arabidopsis genome.</title>
        <authorList>
            <person name="Yamada K."/>
            <person name="Lim J."/>
            <person name="Dale J.M."/>
            <person name="Chen H."/>
            <person name="Shinn P."/>
            <person name="Palm C.J."/>
            <person name="Southwick A.M."/>
            <person name="Wu H.C."/>
            <person name="Kim C.J."/>
            <person name="Nguyen M."/>
            <person name="Pham P.K."/>
            <person name="Cheuk R.F."/>
            <person name="Karlin-Newmann G."/>
            <person name="Liu S.X."/>
            <person name="Lam B."/>
            <person name="Sakano H."/>
            <person name="Wu T."/>
            <person name="Yu G."/>
            <person name="Miranda M."/>
            <person name="Quach H.L."/>
            <person name="Tripp M."/>
            <person name="Chang C.H."/>
            <person name="Lee J.M."/>
            <person name="Toriumi M.J."/>
            <person name="Chan M.M."/>
            <person name="Tang C.C."/>
            <person name="Onodera C.S."/>
            <person name="Deng J.M."/>
            <person name="Akiyama K."/>
            <person name="Ansari Y."/>
            <person name="Arakawa T."/>
            <person name="Banh J."/>
            <person name="Banno F."/>
            <person name="Bowser L."/>
            <person name="Brooks S.Y."/>
            <person name="Carninci P."/>
            <person name="Chao Q."/>
            <person name="Choy N."/>
            <person name="Enju A."/>
            <person name="Goldsmith A.D."/>
            <person name="Gurjal M."/>
            <person name="Hansen N.F."/>
            <person name="Hayashizaki Y."/>
            <person name="Johnson-Hopson C."/>
            <person name="Hsuan V.W."/>
            <person name="Iida K."/>
            <person name="Karnes M."/>
            <person name="Khan S."/>
            <person name="Koesema E."/>
            <person name="Ishida J."/>
            <person name="Jiang P.X."/>
            <person name="Jones T."/>
            <person name="Kawai J."/>
            <person name="Kamiya A."/>
            <person name="Meyers C."/>
            <person name="Nakajima M."/>
            <person name="Narusaka M."/>
            <person name="Seki M."/>
            <person name="Sakurai T."/>
            <person name="Satou M."/>
            <person name="Tamse R."/>
            <person name="Vaysberg M."/>
            <person name="Wallender E.K."/>
            <person name="Wong C."/>
            <person name="Yamamura Y."/>
            <person name="Yuan S."/>
            <person name="Shinozaki K."/>
            <person name="Davis R.W."/>
            <person name="Theologis A."/>
            <person name="Ecker J.R."/>
        </authorList>
    </citation>
    <scope>NUCLEOTIDE SEQUENCE [LARGE SCALE MRNA]</scope>
    <source>
        <strain>cv. Columbia</strain>
    </source>
</reference>
<reference key="4">
    <citation type="journal article" date="2005" name="BMC Evol. Biol.">
        <title>Genome-wide comparative analysis of the IQD gene families in Arabidopsis thaliana and Oryza sativa.</title>
        <authorList>
            <person name="Abel S."/>
            <person name="Savchenko T."/>
            <person name="Levy M."/>
        </authorList>
    </citation>
    <scope>INTERACTION WITH CALMODULIN</scope>
    <scope>GENE FAMILY</scope>
    <scope>NOMENCLATURE</scope>
    <source>
        <strain>cv. Columbia</strain>
    </source>
</reference>
<reference key="5">
    <citation type="journal article" date="2017" name="Plant Physiol.">
        <title>The IQD family of calmodulin-binding proteins links calcium signaling to microtubules, membrane subdomains, and the nucleus.</title>
        <authorList>
            <person name="Buerstenbinder K."/>
            <person name="Moeller B."/>
            <person name="Ploetner R."/>
            <person name="Stamm G."/>
            <person name="Hause G."/>
            <person name="Mitra D."/>
            <person name="Abel S."/>
        </authorList>
    </citation>
    <scope>SUBCELLULAR LOCATION</scope>
    <source>
        <strain>cv. Columbia</strain>
    </source>
</reference>
<reference key="6">
    <citation type="journal article" date="2017" name="Plant Signal. Behav.">
        <title>Functions of IQD proteins as hubs in cellular calcium and auxin signaling: A toolbox for shape formation and tissue-specification in plants?</title>
        <authorList>
            <person name="Buerstenbinder K."/>
            <person name="Mitra D."/>
            <person name="Quegwer J."/>
        </authorList>
    </citation>
    <scope>REVIEW</scope>
</reference>
<feature type="chain" id="PRO_0000453129" description="Protein IQ-DOMAIN 24">
    <location>
        <begin position="1"/>
        <end position="401"/>
    </location>
</feature>
<feature type="domain" description="IQ 1" evidence="2">
    <location>
        <begin position="105"/>
        <end position="133"/>
    </location>
</feature>
<feature type="domain" description="IQ 2" evidence="2">
    <location>
        <begin position="134"/>
        <end position="156"/>
    </location>
</feature>
<feature type="region of interest" description="Disordered" evidence="3">
    <location>
        <begin position="1"/>
        <end position="48"/>
    </location>
</feature>
<feature type="region of interest" description="Calmodulin-binding" evidence="5">
    <location>
        <begin position="105"/>
        <end position="121"/>
    </location>
</feature>
<feature type="region of interest" description="Disordered" evidence="3">
    <location>
        <begin position="165"/>
        <end position="186"/>
    </location>
</feature>
<feature type="region of interest" description="Disordered" evidence="3">
    <location>
        <begin position="258"/>
        <end position="296"/>
    </location>
</feature>
<feature type="compositionally biased region" description="Low complexity" evidence="3">
    <location>
        <begin position="165"/>
        <end position="176"/>
    </location>
</feature>
<feature type="compositionally biased region" description="Low complexity" evidence="3">
    <location>
        <begin position="278"/>
        <end position="287"/>
    </location>
</feature>
<proteinExistence type="evidence at protein level"/>
<organism>
    <name type="scientific">Arabidopsis thaliana</name>
    <name type="common">Mouse-ear cress</name>
    <dbReference type="NCBI Taxonomy" id="3702"/>
    <lineage>
        <taxon>Eukaryota</taxon>
        <taxon>Viridiplantae</taxon>
        <taxon>Streptophyta</taxon>
        <taxon>Embryophyta</taxon>
        <taxon>Tracheophyta</taxon>
        <taxon>Spermatophyta</taxon>
        <taxon>Magnoliopsida</taxon>
        <taxon>eudicotyledons</taxon>
        <taxon>Gunneridae</taxon>
        <taxon>Pentapetalae</taxon>
        <taxon>rosids</taxon>
        <taxon>malvids</taxon>
        <taxon>Brassicales</taxon>
        <taxon>Brassicaceae</taxon>
        <taxon>Camelineae</taxon>
        <taxon>Arabidopsis</taxon>
    </lineage>
</organism>